<comment type="function">
    <text evidence="1">DNA-dependent RNA polymerase catalyzes the transcription of DNA into RNA using the four ribonucleoside triphosphates as substrates.</text>
</comment>
<comment type="catalytic activity">
    <reaction evidence="1">
        <text>RNA(n) + a ribonucleoside 5'-triphosphate = RNA(n+1) + diphosphate</text>
        <dbReference type="Rhea" id="RHEA:21248"/>
        <dbReference type="Rhea" id="RHEA-COMP:14527"/>
        <dbReference type="Rhea" id="RHEA-COMP:17342"/>
        <dbReference type="ChEBI" id="CHEBI:33019"/>
        <dbReference type="ChEBI" id="CHEBI:61557"/>
        <dbReference type="ChEBI" id="CHEBI:140395"/>
        <dbReference type="EC" id="2.7.7.6"/>
    </reaction>
</comment>
<comment type="cofactor">
    <cofactor evidence="1">
        <name>Mg(2+)</name>
        <dbReference type="ChEBI" id="CHEBI:18420"/>
    </cofactor>
    <text evidence="1">Binds 1 Mg(2+) ion per subunit.</text>
</comment>
<comment type="cofactor">
    <cofactor evidence="1">
        <name>Zn(2+)</name>
        <dbReference type="ChEBI" id="CHEBI:29105"/>
    </cofactor>
    <text evidence="1">Binds 2 Zn(2+) ions per subunit.</text>
</comment>
<comment type="subunit">
    <text evidence="1">The RNAP catalytic core consists of 2 alpha, 1 beta, 1 beta' and 1 omega subunit. When a sigma factor is associated with the core the holoenzyme is formed, which can initiate transcription.</text>
</comment>
<comment type="similarity">
    <text evidence="1">Belongs to the RNA polymerase beta' chain family.</text>
</comment>
<organism>
    <name type="scientific">Nitrosomonas europaea (strain ATCC 19718 / CIP 103999 / KCTC 2705 / NBRC 14298)</name>
    <dbReference type="NCBI Taxonomy" id="228410"/>
    <lineage>
        <taxon>Bacteria</taxon>
        <taxon>Pseudomonadati</taxon>
        <taxon>Pseudomonadota</taxon>
        <taxon>Betaproteobacteria</taxon>
        <taxon>Nitrosomonadales</taxon>
        <taxon>Nitrosomonadaceae</taxon>
        <taxon>Nitrosomonas</taxon>
    </lineage>
</organism>
<proteinExistence type="inferred from homology"/>
<name>RPOC_NITEU</name>
<evidence type="ECO:0000255" key="1">
    <source>
        <dbReference type="HAMAP-Rule" id="MF_01322"/>
    </source>
</evidence>
<dbReference type="EC" id="2.7.7.6" evidence="1"/>
<dbReference type="EMBL" id="AL954747">
    <property type="protein sequence ID" value="CAD85956.1"/>
    <property type="molecule type" value="Genomic_DNA"/>
</dbReference>
<dbReference type="RefSeq" id="WP_011112558.1">
    <property type="nucleotide sequence ID" value="NC_004757.1"/>
</dbReference>
<dbReference type="SMR" id="Q82T76"/>
<dbReference type="STRING" id="228410.NE2045"/>
<dbReference type="GeneID" id="87105182"/>
<dbReference type="KEGG" id="neu:NE2045"/>
<dbReference type="eggNOG" id="COG0086">
    <property type="taxonomic scope" value="Bacteria"/>
</dbReference>
<dbReference type="HOGENOM" id="CLU_000524_3_1_4"/>
<dbReference type="OrthoDB" id="9815296at2"/>
<dbReference type="PhylomeDB" id="Q82T76"/>
<dbReference type="Proteomes" id="UP000001416">
    <property type="component" value="Chromosome"/>
</dbReference>
<dbReference type="GO" id="GO:0000428">
    <property type="term" value="C:DNA-directed RNA polymerase complex"/>
    <property type="evidence" value="ECO:0007669"/>
    <property type="project" value="UniProtKB-KW"/>
</dbReference>
<dbReference type="GO" id="GO:0003677">
    <property type="term" value="F:DNA binding"/>
    <property type="evidence" value="ECO:0007669"/>
    <property type="project" value="UniProtKB-UniRule"/>
</dbReference>
<dbReference type="GO" id="GO:0003899">
    <property type="term" value="F:DNA-directed RNA polymerase activity"/>
    <property type="evidence" value="ECO:0007669"/>
    <property type="project" value="UniProtKB-UniRule"/>
</dbReference>
<dbReference type="GO" id="GO:0000287">
    <property type="term" value="F:magnesium ion binding"/>
    <property type="evidence" value="ECO:0007669"/>
    <property type="project" value="UniProtKB-UniRule"/>
</dbReference>
<dbReference type="GO" id="GO:0008270">
    <property type="term" value="F:zinc ion binding"/>
    <property type="evidence" value="ECO:0007669"/>
    <property type="project" value="UniProtKB-UniRule"/>
</dbReference>
<dbReference type="GO" id="GO:0006351">
    <property type="term" value="P:DNA-templated transcription"/>
    <property type="evidence" value="ECO:0007669"/>
    <property type="project" value="UniProtKB-UniRule"/>
</dbReference>
<dbReference type="CDD" id="cd02655">
    <property type="entry name" value="RNAP_beta'_C"/>
    <property type="match status" value="1"/>
</dbReference>
<dbReference type="CDD" id="cd01609">
    <property type="entry name" value="RNAP_beta'_N"/>
    <property type="match status" value="1"/>
</dbReference>
<dbReference type="FunFam" id="1.10.132.30:FF:000003">
    <property type="entry name" value="DNA-directed RNA polymerase subunit beta"/>
    <property type="match status" value="1"/>
</dbReference>
<dbReference type="FunFam" id="1.10.150.390:FF:000002">
    <property type="entry name" value="DNA-directed RNA polymerase subunit beta"/>
    <property type="match status" value="1"/>
</dbReference>
<dbReference type="FunFam" id="4.10.860.120:FF:000001">
    <property type="entry name" value="DNA-directed RNA polymerase subunit beta"/>
    <property type="match status" value="1"/>
</dbReference>
<dbReference type="Gene3D" id="1.10.132.30">
    <property type="match status" value="1"/>
</dbReference>
<dbReference type="Gene3D" id="1.10.150.390">
    <property type="match status" value="1"/>
</dbReference>
<dbReference type="Gene3D" id="1.10.1790.20">
    <property type="match status" value="1"/>
</dbReference>
<dbReference type="Gene3D" id="1.10.40.90">
    <property type="match status" value="1"/>
</dbReference>
<dbReference type="Gene3D" id="2.40.40.20">
    <property type="match status" value="1"/>
</dbReference>
<dbReference type="Gene3D" id="2.40.50.100">
    <property type="match status" value="3"/>
</dbReference>
<dbReference type="Gene3D" id="4.10.860.120">
    <property type="entry name" value="RNA polymerase II, clamp domain"/>
    <property type="match status" value="1"/>
</dbReference>
<dbReference type="Gene3D" id="1.10.274.100">
    <property type="entry name" value="RNA polymerase Rpb1, domain 3"/>
    <property type="match status" value="1"/>
</dbReference>
<dbReference type="HAMAP" id="MF_01322">
    <property type="entry name" value="RNApol_bact_RpoC"/>
    <property type="match status" value="1"/>
</dbReference>
<dbReference type="InterPro" id="IPR045867">
    <property type="entry name" value="DNA-dir_RpoC_beta_prime"/>
</dbReference>
<dbReference type="InterPro" id="IPR012754">
    <property type="entry name" value="DNA-dir_RpoC_beta_prime_bact"/>
</dbReference>
<dbReference type="InterPro" id="IPR000722">
    <property type="entry name" value="RNA_pol_asu"/>
</dbReference>
<dbReference type="InterPro" id="IPR006592">
    <property type="entry name" value="RNA_pol_N"/>
</dbReference>
<dbReference type="InterPro" id="IPR007080">
    <property type="entry name" value="RNA_pol_Rpb1_1"/>
</dbReference>
<dbReference type="InterPro" id="IPR007066">
    <property type="entry name" value="RNA_pol_Rpb1_3"/>
</dbReference>
<dbReference type="InterPro" id="IPR042102">
    <property type="entry name" value="RNA_pol_Rpb1_3_sf"/>
</dbReference>
<dbReference type="InterPro" id="IPR007083">
    <property type="entry name" value="RNA_pol_Rpb1_4"/>
</dbReference>
<dbReference type="InterPro" id="IPR007081">
    <property type="entry name" value="RNA_pol_Rpb1_5"/>
</dbReference>
<dbReference type="InterPro" id="IPR044893">
    <property type="entry name" value="RNA_pol_Rpb1_clamp_domain"/>
</dbReference>
<dbReference type="InterPro" id="IPR038120">
    <property type="entry name" value="Rpb1_funnel_sf"/>
</dbReference>
<dbReference type="InterPro" id="IPR011054">
    <property type="entry name" value="Rudment_hybrid_motif"/>
</dbReference>
<dbReference type="NCBIfam" id="TIGR02386">
    <property type="entry name" value="rpoC_TIGR"/>
    <property type="match status" value="1"/>
</dbReference>
<dbReference type="PANTHER" id="PTHR19376">
    <property type="entry name" value="DNA-DIRECTED RNA POLYMERASE"/>
    <property type="match status" value="1"/>
</dbReference>
<dbReference type="PANTHER" id="PTHR19376:SF54">
    <property type="entry name" value="DNA-DIRECTED RNA POLYMERASE SUBUNIT BETA"/>
    <property type="match status" value="1"/>
</dbReference>
<dbReference type="Pfam" id="PF04997">
    <property type="entry name" value="RNA_pol_Rpb1_1"/>
    <property type="match status" value="1"/>
</dbReference>
<dbReference type="Pfam" id="PF00623">
    <property type="entry name" value="RNA_pol_Rpb1_2"/>
    <property type="match status" value="2"/>
</dbReference>
<dbReference type="Pfam" id="PF04983">
    <property type="entry name" value="RNA_pol_Rpb1_3"/>
    <property type="match status" value="1"/>
</dbReference>
<dbReference type="Pfam" id="PF05000">
    <property type="entry name" value="RNA_pol_Rpb1_4"/>
    <property type="match status" value="1"/>
</dbReference>
<dbReference type="Pfam" id="PF04998">
    <property type="entry name" value="RNA_pol_Rpb1_5"/>
    <property type="match status" value="1"/>
</dbReference>
<dbReference type="SMART" id="SM00663">
    <property type="entry name" value="RPOLA_N"/>
    <property type="match status" value="1"/>
</dbReference>
<dbReference type="SUPFAM" id="SSF64484">
    <property type="entry name" value="beta and beta-prime subunits of DNA dependent RNA-polymerase"/>
    <property type="match status" value="1"/>
</dbReference>
<dbReference type="SUPFAM" id="SSF51246">
    <property type="entry name" value="Rudiment single hybrid motif"/>
    <property type="match status" value="1"/>
</dbReference>
<keyword id="KW-0240">DNA-directed RNA polymerase</keyword>
<keyword id="KW-0460">Magnesium</keyword>
<keyword id="KW-0479">Metal-binding</keyword>
<keyword id="KW-0548">Nucleotidyltransferase</keyword>
<keyword id="KW-1185">Reference proteome</keyword>
<keyword id="KW-0804">Transcription</keyword>
<keyword id="KW-0808">Transferase</keyword>
<keyword id="KW-0862">Zinc</keyword>
<feature type="chain" id="PRO_0000067769" description="DNA-directed RNA polymerase subunit beta'">
    <location>
        <begin position="1"/>
        <end position="1404"/>
    </location>
</feature>
<feature type="binding site" evidence="1">
    <location>
        <position position="70"/>
    </location>
    <ligand>
        <name>Zn(2+)</name>
        <dbReference type="ChEBI" id="CHEBI:29105"/>
        <label>1</label>
    </ligand>
</feature>
<feature type="binding site" evidence="1">
    <location>
        <position position="72"/>
    </location>
    <ligand>
        <name>Zn(2+)</name>
        <dbReference type="ChEBI" id="CHEBI:29105"/>
        <label>1</label>
    </ligand>
</feature>
<feature type="binding site" evidence="1">
    <location>
        <position position="85"/>
    </location>
    <ligand>
        <name>Zn(2+)</name>
        <dbReference type="ChEBI" id="CHEBI:29105"/>
        <label>1</label>
    </ligand>
</feature>
<feature type="binding site" evidence="1">
    <location>
        <position position="88"/>
    </location>
    <ligand>
        <name>Zn(2+)</name>
        <dbReference type="ChEBI" id="CHEBI:29105"/>
        <label>1</label>
    </ligand>
</feature>
<feature type="binding site" evidence="1">
    <location>
        <position position="460"/>
    </location>
    <ligand>
        <name>Mg(2+)</name>
        <dbReference type="ChEBI" id="CHEBI:18420"/>
    </ligand>
</feature>
<feature type="binding site" evidence="1">
    <location>
        <position position="462"/>
    </location>
    <ligand>
        <name>Mg(2+)</name>
        <dbReference type="ChEBI" id="CHEBI:18420"/>
    </ligand>
</feature>
<feature type="binding site" evidence="1">
    <location>
        <position position="464"/>
    </location>
    <ligand>
        <name>Mg(2+)</name>
        <dbReference type="ChEBI" id="CHEBI:18420"/>
    </ligand>
</feature>
<feature type="binding site" evidence="1">
    <location>
        <position position="825"/>
    </location>
    <ligand>
        <name>Zn(2+)</name>
        <dbReference type="ChEBI" id="CHEBI:29105"/>
        <label>2</label>
    </ligand>
</feature>
<feature type="binding site" evidence="1">
    <location>
        <position position="899"/>
    </location>
    <ligand>
        <name>Zn(2+)</name>
        <dbReference type="ChEBI" id="CHEBI:29105"/>
        <label>2</label>
    </ligand>
</feature>
<feature type="binding site" evidence="1">
    <location>
        <position position="906"/>
    </location>
    <ligand>
        <name>Zn(2+)</name>
        <dbReference type="ChEBI" id="CHEBI:29105"/>
        <label>2</label>
    </ligand>
</feature>
<feature type="binding site" evidence="1">
    <location>
        <position position="909"/>
    </location>
    <ligand>
        <name>Zn(2+)</name>
        <dbReference type="ChEBI" id="CHEBI:29105"/>
        <label>2</label>
    </ligand>
</feature>
<protein>
    <recommendedName>
        <fullName evidence="1">DNA-directed RNA polymerase subunit beta'</fullName>
        <shortName evidence="1">RNAP subunit beta'</shortName>
        <ecNumber evidence="1">2.7.7.6</ecNumber>
    </recommendedName>
    <alternativeName>
        <fullName evidence="1">RNA polymerase subunit beta'</fullName>
    </alternativeName>
    <alternativeName>
        <fullName evidence="1">Transcriptase subunit beta'</fullName>
    </alternativeName>
</protein>
<accession>Q82T76</accession>
<reference key="1">
    <citation type="journal article" date="2003" name="J. Bacteriol.">
        <title>Complete genome sequence of the ammonia-oxidizing bacterium and obligate chemolithoautotroph Nitrosomonas europaea.</title>
        <authorList>
            <person name="Chain P."/>
            <person name="Lamerdin J.E."/>
            <person name="Larimer F.W."/>
            <person name="Regala W."/>
            <person name="Lao V."/>
            <person name="Land M.L."/>
            <person name="Hauser L."/>
            <person name="Hooper A.B."/>
            <person name="Klotz M.G."/>
            <person name="Norton J."/>
            <person name="Sayavedra-Soto L.A."/>
            <person name="Arciero D.M."/>
            <person name="Hommes N.G."/>
            <person name="Whittaker M.M."/>
            <person name="Arp D.J."/>
        </authorList>
    </citation>
    <scope>NUCLEOTIDE SEQUENCE [LARGE SCALE GENOMIC DNA]</scope>
    <source>
        <strain>ATCC 19718 / CIP 103999 / KCTC 2705 / NBRC 14298</strain>
    </source>
</reference>
<sequence length="1404" mass="155851">MKALLDLFKQVTQKEEFDSIKIGLASPEKIRSWSYGEVKKPETINYRTFKPERDGLFCAKIFGPVKDYECLCGKYKRLKHRGVICEKCGVEVTLSRIRRERMGHIELASPVAHIWFLKSLPSRLGLVLDMTLRDIERVLYFEAYVVTDPGMTPLNRGQLLTEDDYLNKTEEFGDDFSAVMGAEGIRTLLSNMDIPLEIESLRLEIQTTGSETKIKKAAKRLKVLEAFNKSGMKPEWMILTVLPVLPPELRPLVPLDGGRFATSDLNDLYRRVINRNNRLKRLLELRAPEIIIRNEKRMLQESVDSLLDNGRRGKAMTGANKRPLKSLADMIKGKGGRFRQNLLGKRVDYSGRSVIVVGPQLKLHQCGLPKKMALELFKPFIFNKLETMGVASTIKAAKREVENESPIVWDILEEVIREHPVMLNRAPTLHRLGIQAFEPILVEGKAIQLHPLVCAAFNADFDGDQMAVHVPLSLEAQMECRTLMLSTNNVLSPANGDPIIVPSQDIVLGLYYMTRKKIGAQGEGMVFSDISEVVRAYENKVVELNAGIIVRIKERKKSRSHGEEPVEAITRYETTVGRALISEILPAGLPFSIINKVLKKKEISKLINASFRLCGLRETVIFADKLMYSGFSYATRGGISICLDDLVTPSQKNDIIHAAEQEVHEIANQYISGLVTQGERYNKVVDIWGRAGDQVAKAMMDQLSVEPVTDRETGQVRADKNGQVVTQESFNSIYMMADSGARGSAAQIRQLSGMRGLMAKPDGSIIETPITANFREGLNILQYFISTHGARKGLADTALKTANSGYLTRRLVDVTQDLVITEDDCDTDGGVIMKALVEGGDVIESLRERILGRVAATDIVNPETGAVIYAAGMLLDEDAVDEIETCGIDEVKVRTPLTCETRYGLCAKCYGRDLGRGMLVNVGEAVGVIAAQSIGEPGTQLTMRTFHIGGAASRTVVANQVESKSNGVIRYSHHIRYVKNAQNELIVISRSGEVYIQDENGRERERHKIPYGATLLVQDGEVIKAGQILASWEPHKRPIIAEYAGKVRFENVEEGVTVVRQIDEITGLATLVVIDPKRRNVAQSKGLRPLVKFLDENDNEINIPGSDQPVSITFHVGSIITVRDGQQVNIGEVLARIPQETSKTRDITGGLPRVAELFEARVPKDVGFLAEATGTVAFGKDTKGKQRLVITDLDGVAHEYLIPKDKHVTAHDGQVVNKGEVIVDGPIDPHDILRLQGVEALARYISNEVQDVYRLQGVRINDKHIEVIVRQMLRRVQIMNAGDSSFIPGEQVERAEVLTENEKLIAENKMPATYEYVLLGITKASLSTDSFISAASFQETTRVLTEASIMGKKDDLRGLKENVIVGRLIPAGTGLSFHNIRKKQRLSESAAYLDTDLTENEVTE</sequence>
<gene>
    <name evidence="1" type="primary">rpoC</name>
    <name type="ordered locus">NE2045</name>
</gene>